<gene>
    <name evidence="1" type="primary">greA</name>
    <name type="ordered locus">mhp690</name>
</gene>
<keyword id="KW-0175">Coiled coil</keyword>
<keyword id="KW-0238">DNA-binding</keyword>
<keyword id="KW-0804">Transcription</keyword>
<keyword id="KW-0805">Transcription regulation</keyword>
<organism>
    <name type="scientific">Mesomycoplasma hyopneumoniae (strain 232)</name>
    <name type="common">Mycoplasma hyopneumoniae</name>
    <dbReference type="NCBI Taxonomy" id="295358"/>
    <lineage>
        <taxon>Bacteria</taxon>
        <taxon>Bacillati</taxon>
        <taxon>Mycoplasmatota</taxon>
        <taxon>Mycoplasmoidales</taxon>
        <taxon>Metamycoplasmataceae</taxon>
        <taxon>Mesomycoplasma</taxon>
    </lineage>
</organism>
<sequence length="160" mass="17975">MKNTVNDKILLTQQKLEEIEKELEHLINVERVNVIQEIKDARSQGDLSENAEYDVAREKQGIIESRIRELETIISKAKIIKADLGSSRVSIGSKVSLENVESGEIQTFQIVSSIDADPFKSKISNFSPIAQALLGQHQGDEVEVDVNEKYSVRILEVINE</sequence>
<accession>Q5ZZL8</accession>
<protein>
    <recommendedName>
        <fullName evidence="1">Transcription elongation factor GreA</fullName>
    </recommendedName>
    <alternativeName>
        <fullName evidence="1">Transcript cleavage factor GreA</fullName>
    </alternativeName>
</protein>
<name>GREA_MESH2</name>
<comment type="function">
    <text evidence="1">Necessary for efficient RNA polymerase transcription elongation past template-encoded arresting sites. The arresting sites in DNA have the property of trapping a certain fraction of elongating RNA polymerases that pass through, resulting in locked ternary complexes. Cleavage of the nascent transcript by cleavage factors such as GreA or GreB allows the resumption of elongation from the new 3'terminus. GreA releases sequences of 2 to 3 nucleotides.</text>
</comment>
<comment type="similarity">
    <text evidence="1">Belongs to the GreA/GreB family.</text>
</comment>
<evidence type="ECO:0000255" key="1">
    <source>
        <dbReference type="HAMAP-Rule" id="MF_00105"/>
    </source>
</evidence>
<dbReference type="EMBL" id="AE017332">
    <property type="protein sequence ID" value="AAV27675.1"/>
    <property type="molecule type" value="Genomic_DNA"/>
</dbReference>
<dbReference type="RefSeq" id="WP_011206520.1">
    <property type="nucleotide sequence ID" value="NC_006360.1"/>
</dbReference>
<dbReference type="SMR" id="Q5ZZL8"/>
<dbReference type="KEGG" id="mhy:mhp690"/>
<dbReference type="eggNOG" id="COG0782">
    <property type="taxonomic scope" value="Bacteria"/>
</dbReference>
<dbReference type="HOGENOM" id="CLU_101379_2_1_14"/>
<dbReference type="PhylomeDB" id="Q5ZZL8"/>
<dbReference type="Proteomes" id="UP000006822">
    <property type="component" value="Chromosome"/>
</dbReference>
<dbReference type="GO" id="GO:0003677">
    <property type="term" value="F:DNA binding"/>
    <property type="evidence" value="ECO:0007669"/>
    <property type="project" value="UniProtKB-UniRule"/>
</dbReference>
<dbReference type="GO" id="GO:0070063">
    <property type="term" value="F:RNA polymerase binding"/>
    <property type="evidence" value="ECO:0007669"/>
    <property type="project" value="InterPro"/>
</dbReference>
<dbReference type="GO" id="GO:0006354">
    <property type="term" value="P:DNA-templated transcription elongation"/>
    <property type="evidence" value="ECO:0007669"/>
    <property type="project" value="TreeGrafter"/>
</dbReference>
<dbReference type="GO" id="GO:0032784">
    <property type="term" value="P:regulation of DNA-templated transcription elongation"/>
    <property type="evidence" value="ECO:0007669"/>
    <property type="project" value="UniProtKB-UniRule"/>
</dbReference>
<dbReference type="FunFam" id="1.10.287.180:FF:000001">
    <property type="entry name" value="Transcription elongation factor GreA"/>
    <property type="match status" value="1"/>
</dbReference>
<dbReference type="Gene3D" id="3.10.50.30">
    <property type="entry name" value="Transcription elongation factor, GreA/GreB, C-terminal domain"/>
    <property type="match status" value="1"/>
</dbReference>
<dbReference type="Gene3D" id="1.10.287.180">
    <property type="entry name" value="Transcription elongation factor, GreA/GreB, N-terminal domain"/>
    <property type="match status" value="1"/>
</dbReference>
<dbReference type="HAMAP" id="MF_00105">
    <property type="entry name" value="GreA_GreB"/>
    <property type="match status" value="1"/>
</dbReference>
<dbReference type="InterPro" id="IPR036953">
    <property type="entry name" value="GreA/GreB_C_sf"/>
</dbReference>
<dbReference type="InterPro" id="IPR018151">
    <property type="entry name" value="TF_GreA/GreB_CS"/>
</dbReference>
<dbReference type="InterPro" id="IPR006359">
    <property type="entry name" value="Tscrpt_elong_fac_GreA"/>
</dbReference>
<dbReference type="InterPro" id="IPR028624">
    <property type="entry name" value="Tscrpt_elong_fac_GreA/B"/>
</dbReference>
<dbReference type="InterPro" id="IPR001437">
    <property type="entry name" value="Tscrpt_elong_fac_GreA/B_C"/>
</dbReference>
<dbReference type="InterPro" id="IPR023459">
    <property type="entry name" value="Tscrpt_elong_fac_GreA/B_fam"/>
</dbReference>
<dbReference type="InterPro" id="IPR022691">
    <property type="entry name" value="Tscrpt_elong_fac_GreA/B_N"/>
</dbReference>
<dbReference type="InterPro" id="IPR036805">
    <property type="entry name" value="Tscrpt_elong_fac_GreA/B_N_sf"/>
</dbReference>
<dbReference type="NCBIfam" id="TIGR01462">
    <property type="entry name" value="greA"/>
    <property type="match status" value="1"/>
</dbReference>
<dbReference type="NCBIfam" id="NF001263">
    <property type="entry name" value="PRK00226.1-4"/>
    <property type="match status" value="1"/>
</dbReference>
<dbReference type="PANTHER" id="PTHR30437">
    <property type="entry name" value="TRANSCRIPTION ELONGATION FACTOR GREA"/>
    <property type="match status" value="1"/>
</dbReference>
<dbReference type="PANTHER" id="PTHR30437:SF4">
    <property type="entry name" value="TRANSCRIPTION ELONGATION FACTOR GREA"/>
    <property type="match status" value="1"/>
</dbReference>
<dbReference type="Pfam" id="PF01272">
    <property type="entry name" value="GreA_GreB"/>
    <property type="match status" value="1"/>
</dbReference>
<dbReference type="Pfam" id="PF03449">
    <property type="entry name" value="GreA_GreB_N"/>
    <property type="match status" value="1"/>
</dbReference>
<dbReference type="PIRSF" id="PIRSF006092">
    <property type="entry name" value="GreA_GreB"/>
    <property type="match status" value="1"/>
</dbReference>
<dbReference type="SUPFAM" id="SSF54534">
    <property type="entry name" value="FKBP-like"/>
    <property type="match status" value="1"/>
</dbReference>
<dbReference type="SUPFAM" id="SSF46557">
    <property type="entry name" value="GreA transcript cleavage protein, N-terminal domain"/>
    <property type="match status" value="1"/>
</dbReference>
<dbReference type="PROSITE" id="PS00829">
    <property type="entry name" value="GREAB_1"/>
    <property type="match status" value="1"/>
</dbReference>
<dbReference type="PROSITE" id="PS00830">
    <property type="entry name" value="GREAB_2"/>
    <property type="match status" value="1"/>
</dbReference>
<feature type="chain" id="PRO_1000202864" description="Transcription elongation factor GreA">
    <location>
        <begin position="1"/>
        <end position="160"/>
    </location>
</feature>
<feature type="coiled-coil region" evidence="1">
    <location>
        <begin position="2"/>
        <end position="84"/>
    </location>
</feature>
<proteinExistence type="inferred from homology"/>
<reference key="1">
    <citation type="journal article" date="2004" name="J. Bacteriol.">
        <title>The genome sequence of Mycoplasma hyopneumoniae strain 232, the agent of swine mycoplasmosis.</title>
        <authorList>
            <person name="Minion F.C."/>
            <person name="Lefkowitz E.J."/>
            <person name="Madsen M.L."/>
            <person name="Cleary B.J."/>
            <person name="Swartzell S.M."/>
            <person name="Mahairas G.G."/>
        </authorList>
    </citation>
    <scope>NUCLEOTIDE SEQUENCE [LARGE SCALE GENOMIC DNA]</scope>
    <source>
        <strain>232</strain>
    </source>
</reference>